<protein>
    <recommendedName>
        <fullName>Proliferating cell nuclear antigen</fullName>
        <shortName>PCNA</shortName>
    </recommendedName>
</protein>
<comment type="function">
    <text evidence="1">This protein is an auxiliary protein of DNA polymerase delta and is involved in the control of eukaryotic DNA replication by increasing the polymerase's processibility during elongation of the leading strand. Involved in DNA repair.</text>
</comment>
<comment type="subunit">
    <text evidence="1">Homotrimer.</text>
</comment>
<comment type="subcellular location">
    <subcellularLocation>
        <location evidence="1">Nucleus</location>
    </subcellularLocation>
</comment>
<comment type="PTM">
    <text evidence="1">Monoubiquitinated on Lys-164 upon DNA damage, and then polyubiquitinated through 'Lys-63'-linkage.</text>
</comment>
<comment type="similarity">
    <text evidence="3">Belongs to the PCNA family.</text>
</comment>
<comment type="sequence caution" evidence="3">
    <conflict type="erroneous gene model prediction">
        <sequence resource="EMBL-CDS" id="EGS18086"/>
    </conflict>
</comment>
<accession>G0SF70</accession>
<feature type="chain" id="PRO_0000453181" description="Proliferating cell nuclear antigen">
    <location>
        <begin position="1"/>
        <end position="259"/>
    </location>
</feature>
<feature type="DNA-binding region" evidence="2">
    <location>
        <begin position="61"/>
        <end position="80"/>
    </location>
</feature>
<feature type="cross-link" description="Glycyl lysine isopeptide (Lys-Gly) (interchain with G-Cter in SUMO); alternate" evidence="1">
    <location>
        <position position="164"/>
    </location>
</feature>
<feature type="cross-link" description="Glycyl lysine isopeptide (Lys-Gly) (interchain with G-Cter in ubiquitin); alternate" evidence="1">
    <location>
        <position position="164"/>
    </location>
</feature>
<feature type="strand" evidence="5">
    <location>
        <begin position="2"/>
        <end position="7"/>
    </location>
</feature>
<feature type="helix" evidence="5">
    <location>
        <begin position="10"/>
        <end position="19"/>
    </location>
</feature>
<feature type="turn" evidence="5">
    <location>
        <begin position="20"/>
        <end position="22"/>
    </location>
</feature>
<feature type="strand" evidence="5">
    <location>
        <begin position="24"/>
        <end position="31"/>
    </location>
</feature>
<feature type="strand" evidence="5">
    <location>
        <begin position="34"/>
        <end position="40"/>
    </location>
</feature>
<feature type="strand" evidence="5">
    <location>
        <begin position="44"/>
        <end position="53"/>
    </location>
</feature>
<feature type="helix" evidence="5">
    <location>
        <begin position="54"/>
        <end position="56"/>
    </location>
</feature>
<feature type="strand" evidence="5">
    <location>
        <begin position="57"/>
        <end position="64"/>
    </location>
</feature>
<feature type="strand" evidence="5">
    <location>
        <begin position="66"/>
        <end position="71"/>
    </location>
</feature>
<feature type="helix" evidence="5">
    <location>
        <begin position="72"/>
        <end position="79"/>
    </location>
</feature>
<feature type="strand" evidence="5">
    <location>
        <begin position="86"/>
        <end position="92"/>
    </location>
</feature>
<feature type="strand" evidence="5">
    <location>
        <begin position="97"/>
        <end position="104"/>
    </location>
</feature>
<feature type="strand" evidence="5">
    <location>
        <begin position="106"/>
        <end position="109"/>
    </location>
</feature>
<feature type="strand" evidence="5">
    <location>
        <begin position="111"/>
        <end position="117"/>
    </location>
</feature>
<feature type="strand" evidence="5">
    <location>
        <begin position="134"/>
        <end position="140"/>
    </location>
</feature>
<feature type="helix" evidence="5">
    <location>
        <begin position="141"/>
        <end position="152"/>
    </location>
</feature>
<feature type="strand" evidence="5">
    <location>
        <begin position="156"/>
        <end position="163"/>
    </location>
</feature>
<feature type="strand" evidence="5">
    <location>
        <begin position="166"/>
        <end position="173"/>
    </location>
</feature>
<feature type="strand" evidence="5">
    <location>
        <begin position="176"/>
        <end position="182"/>
    </location>
</feature>
<feature type="helix" evidence="5">
    <location>
        <begin position="191"/>
        <end position="193"/>
    </location>
</feature>
<feature type="strand" evidence="5">
    <location>
        <begin position="195"/>
        <end position="201"/>
    </location>
</feature>
<feature type="strand" evidence="5">
    <location>
        <begin position="203"/>
        <end position="208"/>
    </location>
</feature>
<feature type="helix" evidence="5">
    <location>
        <begin position="209"/>
        <end position="215"/>
    </location>
</feature>
<feature type="helix" evidence="5">
    <location>
        <begin position="216"/>
        <end position="221"/>
    </location>
</feature>
<feature type="strand" evidence="5">
    <location>
        <begin position="223"/>
        <end position="229"/>
    </location>
</feature>
<feature type="strand" evidence="4">
    <location>
        <begin position="231"/>
        <end position="233"/>
    </location>
</feature>
<feature type="strand" evidence="5">
    <location>
        <begin position="235"/>
        <end position="240"/>
    </location>
</feature>
<feature type="strand" evidence="5">
    <location>
        <begin position="246"/>
        <end position="251"/>
    </location>
</feature>
<evidence type="ECO:0000250" key="1">
    <source>
        <dbReference type="UniProtKB" id="P15873"/>
    </source>
</evidence>
<evidence type="ECO:0000255" key="2"/>
<evidence type="ECO:0000305" key="3"/>
<evidence type="ECO:0007829" key="4">
    <source>
        <dbReference type="PDB" id="7O1E"/>
    </source>
</evidence>
<evidence type="ECO:0007829" key="5">
    <source>
        <dbReference type="PDB" id="8Q7I"/>
    </source>
</evidence>
<reference key="1">
    <citation type="journal article" date="2011" name="Cell">
        <title>Insight into structure and assembly of the nuclear pore complex by utilizing the genome of a eukaryotic thermophile.</title>
        <authorList>
            <person name="Amlacher S."/>
            <person name="Sarges P."/>
            <person name="Flemming D."/>
            <person name="van Noort V."/>
            <person name="Kunze R."/>
            <person name="Devos D.P."/>
            <person name="Arumugam M."/>
            <person name="Bork P."/>
            <person name="Hurt E."/>
        </authorList>
    </citation>
    <scope>NUCLEOTIDE SEQUENCE [LARGE SCALE GENOMIC DNA]</scope>
    <source>
        <strain>DSM 1495 / CBS 144.50 / IMI 039719</strain>
    </source>
</reference>
<reference key="2">
    <citation type="submission" date="2021-04" db="UniProtKB">
        <authorList>
            <person name="MacNeill S."/>
        </authorList>
    </citation>
    <scope>GENE MODEL REVISION</scope>
</reference>
<dbReference type="EMBL" id="GL988046">
    <property type="protein sequence ID" value="EGS18086.1"/>
    <property type="status" value="ALT_SEQ"/>
    <property type="molecule type" value="Genomic_DNA"/>
</dbReference>
<dbReference type="RefSeq" id="XP_006696417.1">
    <property type="nucleotide sequence ID" value="XM_006696354.1"/>
</dbReference>
<dbReference type="PDB" id="7O1E">
    <property type="method" value="X-ray"/>
    <property type="resolution" value="2.34 A"/>
    <property type="chains" value="A=2-259"/>
</dbReference>
<dbReference type="PDB" id="7O1F">
    <property type="method" value="X-ray"/>
    <property type="resolution" value="2.45 A"/>
    <property type="chains" value="A/B/C/D/E/F=2-259"/>
</dbReference>
<dbReference type="PDB" id="8P9O">
    <property type="method" value="X-ray"/>
    <property type="resolution" value="2.45 A"/>
    <property type="chains" value="A/B/C=2-259"/>
</dbReference>
<dbReference type="PDB" id="8Q7I">
    <property type="method" value="X-ray"/>
    <property type="resolution" value="1.95 A"/>
    <property type="chains" value="A=2-259"/>
</dbReference>
<dbReference type="PDBsum" id="7O1E"/>
<dbReference type="PDBsum" id="7O1F"/>
<dbReference type="PDBsum" id="8P9O"/>
<dbReference type="PDBsum" id="8Q7I"/>
<dbReference type="SMR" id="G0SF70"/>
<dbReference type="STRING" id="759272.G0SF70"/>
<dbReference type="GeneID" id="18260139"/>
<dbReference type="KEGG" id="cthr:CTHT_0061010"/>
<dbReference type="eggNOG" id="KOG1636">
    <property type="taxonomic scope" value="Eukaryota"/>
</dbReference>
<dbReference type="HOGENOM" id="CLU_043978_3_0_1"/>
<dbReference type="OrthoDB" id="534348at2759"/>
<dbReference type="Proteomes" id="UP000008066">
    <property type="component" value="Unassembled WGS sequence"/>
</dbReference>
<dbReference type="GO" id="GO:0043626">
    <property type="term" value="C:PCNA complex"/>
    <property type="evidence" value="ECO:0007669"/>
    <property type="project" value="TreeGrafter"/>
</dbReference>
<dbReference type="GO" id="GO:0003677">
    <property type="term" value="F:DNA binding"/>
    <property type="evidence" value="ECO:0007669"/>
    <property type="project" value="UniProtKB-KW"/>
</dbReference>
<dbReference type="GO" id="GO:0030337">
    <property type="term" value="F:DNA polymerase processivity factor activity"/>
    <property type="evidence" value="ECO:0007669"/>
    <property type="project" value="InterPro"/>
</dbReference>
<dbReference type="GO" id="GO:0006272">
    <property type="term" value="P:leading strand elongation"/>
    <property type="evidence" value="ECO:0007669"/>
    <property type="project" value="TreeGrafter"/>
</dbReference>
<dbReference type="GO" id="GO:0006298">
    <property type="term" value="P:mismatch repair"/>
    <property type="evidence" value="ECO:0007669"/>
    <property type="project" value="TreeGrafter"/>
</dbReference>
<dbReference type="GO" id="GO:0006275">
    <property type="term" value="P:regulation of DNA replication"/>
    <property type="evidence" value="ECO:0007669"/>
    <property type="project" value="InterPro"/>
</dbReference>
<dbReference type="GO" id="GO:0019985">
    <property type="term" value="P:translesion synthesis"/>
    <property type="evidence" value="ECO:0007669"/>
    <property type="project" value="TreeGrafter"/>
</dbReference>
<dbReference type="CDD" id="cd00577">
    <property type="entry name" value="PCNA"/>
    <property type="match status" value="1"/>
</dbReference>
<dbReference type="FunFam" id="3.10.150.10:FF:000006">
    <property type="entry name" value="Proliferating cell nuclear antigen"/>
    <property type="match status" value="1"/>
</dbReference>
<dbReference type="FunFam" id="3.10.150.10:FF:000008">
    <property type="entry name" value="Proliferating cell nuclear antigen"/>
    <property type="match status" value="1"/>
</dbReference>
<dbReference type="FunFam" id="3.70.10.10:FF:000001">
    <property type="entry name" value="Proliferating cell nuclear antigen"/>
    <property type="match status" value="1"/>
</dbReference>
<dbReference type="Gene3D" id="3.10.150.10">
    <property type="entry name" value="DNA Polymerase III, subunit A, domain 2"/>
    <property type="match status" value="2"/>
</dbReference>
<dbReference type="HAMAP" id="MF_00317">
    <property type="entry name" value="DNApol_clamp_arch"/>
    <property type="match status" value="1"/>
</dbReference>
<dbReference type="InterPro" id="IPR046938">
    <property type="entry name" value="DNA_clamp_sf"/>
</dbReference>
<dbReference type="InterPro" id="IPR000730">
    <property type="entry name" value="Pr_cel_nuc_antig"/>
</dbReference>
<dbReference type="InterPro" id="IPR022649">
    <property type="entry name" value="Pr_cel_nuc_antig_C"/>
</dbReference>
<dbReference type="InterPro" id="IPR022659">
    <property type="entry name" value="Pr_cel_nuc_antig_CS"/>
</dbReference>
<dbReference type="InterPro" id="IPR022648">
    <property type="entry name" value="Pr_cel_nuc_antig_N"/>
</dbReference>
<dbReference type="NCBIfam" id="TIGR00590">
    <property type="entry name" value="pcna"/>
    <property type="match status" value="1"/>
</dbReference>
<dbReference type="PANTHER" id="PTHR11352">
    <property type="entry name" value="PROLIFERATING CELL NUCLEAR ANTIGEN"/>
    <property type="match status" value="1"/>
</dbReference>
<dbReference type="PANTHER" id="PTHR11352:SF0">
    <property type="entry name" value="PROLIFERATING CELL NUCLEAR ANTIGEN"/>
    <property type="match status" value="1"/>
</dbReference>
<dbReference type="Pfam" id="PF02747">
    <property type="entry name" value="PCNA_C"/>
    <property type="match status" value="1"/>
</dbReference>
<dbReference type="Pfam" id="PF00705">
    <property type="entry name" value="PCNA_N"/>
    <property type="match status" value="1"/>
</dbReference>
<dbReference type="PRINTS" id="PR00339">
    <property type="entry name" value="PCNACYCLIN"/>
</dbReference>
<dbReference type="SUPFAM" id="SSF55979">
    <property type="entry name" value="DNA clamp"/>
    <property type="match status" value="2"/>
</dbReference>
<dbReference type="PROSITE" id="PS01251">
    <property type="entry name" value="PCNA_1"/>
    <property type="match status" value="1"/>
</dbReference>
<dbReference type="PROSITE" id="PS00293">
    <property type="entry name" value="PCNA_2"/>
    <property type="match status" value="1"/>
</dbReference>
<keyword id="KW-0002">3D-structure</keyword>
<keyword id="KW-0227">DNA damage</keyword>
<keyword id="KW-0234">DNA repair</keyword>
<keyword id="KW-0235">DNA replication</keyword>
<keyword id="KW-0238">DNA-binding</keyword>
<keyword id="KW-1017">Isopeptide bond</keyword>
<keyword id="KW-0539">Nucleus</keyword>
<keyword id="KW-1185">Reference proteome</keyword>
<keyword id="KW-0832">Ubl conjugation</keyword>
<gene>
    <name type="ORF">CTHT_0061010</name>
</gene>
<organism>
    <name type="scientific">Chaetomium thermophilum (strain DSM 1495 / CBS 144.50 / IMI 039719)</name>
    <name type="common">Thermochaetoides thermophila</name>
    <dbReference type="NCBI Taxonomy" id="759272"/>
    <lineage>
        <taxon>Eukaryota</taxon>
        <taxon>Fungi</taxon>
        <taxon>Dikarya</taxon>
        <taxon>Ascomycota</taxon>
        <taxon>Pezizomycotina</taxon>
        <taxon>Sordariomycetes</taxon>
        <taxon>Sordariomycetidae</taxon>
        <taxon>Sordariales</taxon>
        <taxon>Chaetomiaceae</taxon>
        <taxon>Thermochaetoides</taxon>
    </lineage>
</organism>
<proteinExistence type="evidence at protein level"/>
<sequence>MLEARLEQASILKKVVDAIKDLVQDCNFDCNDSGIALQAMDNSHVALVSMMLKAEGFSPYRCDRNIALGVNLTSLTKVLRAAQNEDILTLKAEDAPDVLNLVFESSETDRISEYDLKLMDIDQEHLGIPETEYAATITMPSNEFKRITTDLMAMSESVTIEANKDGVKFSCQGDIGNGSVTLRQHTNVEKPNESIEIELSEPVSLTFSLKYLVNFCKASALSNTVKICLSNEVPLLVEYSLGGSSYLRFYLAPKIGDDE</sequence>
<name>PCNA_CHATD</name>